<evidence type="ECO:0000255" key="1">
    <source>
        <dbReference type="HAMAP-Rule" id="MF_01337"/>
    </source>
</evidence>
<evidence type="ECO:0000305" key="2"/>
<protein>
    <recommendedName>
        <fullName evidence="1">Large ribosomal subunit protein uL18</fullName>
    </recommendedName>
    <alternativeName>
        <fullName evidence="2">50S ribosomal protein L18</fullName>
    </alternativeName>
</protein>
<name>RL18_VIBC3</name>
<gene>
    <name evidence="1" type="primary">rplR</name>
    <name type="ordered locus">VC0395_A2158</name>
    <name type="ordered locus">VC395_2693</name>
</gene>
<comment type="function">
    <text evidence="1">This is one of the proteins that bind and probably mediate the attachment of the 5S RNA into the large ribosomal subunit, where it forms part of the central protuberance.</text>
</comment>
<comment type="subunit">
    <text evidence="1">Part of the 50S ribosomal subunit; part of the 5S rRNA/L5/L18/L25 subcomplex. Contacts the 5S and 23S rRNAs.</text>
</comment>
<comment type="similarity">
    <text evidence="1">Belongs to the universal ribosomal protein uL18 family.</text>
</comment>
<feature type="chain" id="PRO_1000073311" description="Large ribosomal subunit protein uL18">
    <location>
        <begin position="1"/>
        <end position="117"/>
    </location>
</feature>
<sequence length="117" mass="12644">MDKKASRIRRATRARRKIAELGATRLVVHRTPRHVYAQVIAANGSEVIAAASTVEKAIREQVKYTGNIDAAKAVGKAVAERALEKGVTVVAFDRSGFQYHGRVAALADSAREAGLKF</sequence>
<proteinExistence type="inferred from homology"/>
<keyword id="KW-0687">Ribonucleoprotein</keyword>
<keyword id="KW-0689">Ribosomal protein</keyword>
<keyword id="KW-0694">RNA-binding</keyword>
<keyword id="KW-0699">rRNA-binding</keyword>
<accession>A5F564</accession>
<accession>C3LXH9</accession>
<dbReference type="EMBL" id="CP000627">
    <property type="protein sequence ID" value="ABQ22162.1"/>
    <property type="molecule type" value="Genomic_DNA"/>
</dbReference>
<dbReference type="EMBL" id="CP001235">
    <property type="protein sequence ID" value="ACP10679.1"/>
    <property type="molecule type" value="Genomic_DNA"/>
</dbReference>
<dbReference type="RefSeq" id="WP_000358092.1">
    <property type="nucleotide sequence ID" value="NZ_JAACZH010000007.1"/>
</dbReference>
<dbReference type="SMR" id="A5F564"/>
<dbReference type="GeneID" id="94012768"/>
<dbReference type="KEGG" id="vco:VC0395_A2158"/>
<dbReference type="KEGG" id="vcr:VC395_2693"/>
<dbReference type="PATRIC" id="fig|345073.21.peg.2593"/>
<dbReference type="eggNOG" id="COG0256">
    <property type="taxonomic scope" value="Bacteria"/>
</dbReference>
<dbReference type="HOGENOM" id="CLU_098841_0_1_6"/>
<dbReference type="OrthoDB" id="9810939at2"/>
<dbReference type="Proteomes" id="UP000000249">
    <property type="component" value="Chromosome 2"/>
</dbReference>
<dbReference type="GO" id="GO:0022625">
    <property type="term" value="C:cytosolic large ribosomal subunit"/>
    <property type="evidence" value="ECO:0007669"/>
    <property type="project" value="TreeGrafter"/>
</dbReference>
<dbReference type="GO" id="GO:0008097">
    <property type="term" value="F:5S rRNA binding"/>
    <property type="evidence" value="ECO:0007669"/>
    <property type="project" value="TreeGrafter"/>
</dbReference>
<dbReference type="GO" id="GO:0003735">
    <property type="term" value="F:structural constituent of ribosome"/>
    <property type="evidence" value="ECO:0007669"/>
    <property type="project" value="InterPro"/>
</dbReference>
<dbReference type="GO" id="GO:0006412">
    <property type="term" value="P:translation"/>
    <property type="evidence" value="ECO:0007669"/>
    <property type="project" value="UniProtKB-UniRule"/>
</dbReference>
<dbReference type="CDD" id="cd00432">
    <property type="entry name" value="Ribosomal_L18_L5e"/>
    <property type="match status" value="1"/>
</dbReference>
<dbReference type="FunFam" id="3.30.420.100:FF:000001">
    <property type="entry name" value="50S ribosomal protein L18"/>
    <property type="match status" value="1"/>
</dbReference>
<dbReference type="Gene3D" id="3.30.420.100">
    <property type="match status" value="1"/>
</dbReference>
<dbReference type="HAMAP" id="MF_01337_B">
    <property type="entry name" value="Ribosomal_uL18_B"/>
    <property type="match status" value="1"/>
</dbReference>
<dbReference type="InterPro" id="IPR004389">
    <property type="entry name" value="Ribosomal_uL18_bac-type"/>
</dbReference>
<dbReference type="InterPro" id="IPR005484">
    <property type="entry name" value="Ribosomal_uL18_bac/euk"/>
</dbReference>
<dbReference type="NCBIfam" id="TIGR00060">
    <property type="entry name" value="L18_bact"/>
    <property type="match status" value="1"/>
</dbReference>
<dbReference type="PANTHER" id="PTHR12899">
    <property type="entry name" value="39S RIBOSOMAL PROTEIN L18, MITOCHONDRIAL"/>
    <property type="match status" value="1"/>
</dbReference>
<dbReference type="PANTHER" id="PTHR12899:SF3">
    <property type="entry name" value="LARGE RIBOSOMAL SUBUNIT PROTEIN UL18M"/>
    <property type="match status" value="1"/>
</dbReference>
<dbReference type="Pfam" id="PF00861">
    <property type="entry name" value="Ribosomal_L18p"/>
    <property type="match status" value="1"/>
</dbReference>
<dbReference type="SUPFAM" id="SSF53137">
    <property type="entry name" value="Translational machinery components"/>
    <property type="match status" value="1"/>
</dbReference>
<organism>
    <name type="scientific">Vibrio cholerae serotype O1 (strain ATCC 39541 / Classical Ogawa 395 / O395)</name>
    <dbReference type="NCBI Taxonomy" id="345073"/>
    <lineage>
        <taxon>Bacteria</taxon>
        <taxon>Pseudomonadati</taxon>
        <taxon>Pseudomonadota</taxon>
        <taxon>Gammaproteobacteria</taxon>
        <taxon>Vibrionales</taxon>
        <taxon>Vibrionaceae</taxon>
        <taxon>Vibrio</taxon>
    </lineage>
</organism>
<reference key="1">
    <citation type="submission" date="2007-03" db="EMBL/GenBank/DDBJ databases">
        <authorList>
            <person name="Heidelberg J."/>
        </authorList>
    </citation>
    <scope>NUCLEOTIDE SEQUENCE [LARGE SCALE GENOMIC DNA]</scope>
    <source>
        <strain>ATCC 39541 / Classical Ogawa 395 / O395</strain>
    </source>
</reference>
<reference key="2">
    <citation type="journal article" date="2008" name="PLoS ONE">
        <title>A recalibrated molecular clock and independent origins for the cholera pandemic clones.</title>
        <authorList>
            <person name="Feng L."/>
            <person name="Reeves P.R."/>
            <person name="Lan R."/>
            <person name="Ren Y."/>
            <person name="Gao C."/>
            <person name="Zhou Z."/>
            <person name="Ren Y."/>
            <person name="Cheng J."/>
            <person name="Wang W."/>
            <person name="Wang J."/>
            <person name="Qian W."/>
            <person name="Li D."/>
            <person name="Wang L."/>
        </authorList>
    </citation>
    <scope>NUCLEOTIDE SEQUENCE [LARGE SCALE GENOMIC DNA]</scope>
    <source>
        <strain>ATCC 39541 / Classical Ogawa 395 / O395</strain>
    </source>
</reference>